<dbReference type="EMBL" id="AAFI02000019">
    <property type="protein sequence ID" value="EAL68920.1"/>
    <property type="molecule type" value="Genomic_DNA"/>
</dbReference>
<dbReference type="RefSeq" id="XP_642927.1">
    <property type="nucleotide sequence ID" value="XM_637835.1"/>
</dbReference>
<dbReference type="SMR" id="Q86L28"/>
<dbReference type="FunCoup" id="Q86L28">
    <property type="interactions" value="877"/>
</dbReference>
<dbReference type="PaxDb" id="44689-DDB0168993"/>
<dbReference type="EnsemblProtists" id="EAL68920">
    <property type="protein sequence ID" value="EAL68920"/>
    <property type="gene ID" value="DDB_G0276837"/>
</dbReference>
<dbReference type="GeneID" id="8620796"/>
<dbReference type="KEGG" id="ddi:DDB_G0276837"/>
<dbReference type="dictyBase" id="DDB_G0276837"/>
<dbReference type="VEuPathDB" id="AmoebaDB:DDB_G0276837"/>
<dbReference type="eggNOG" id="ENOG502RIPW">
    <property type="taxonomic scope" value="Eukaryota"/>
</dbReference>
<dbReference type="HOGENOM" id="CLU_2727535_0_0_1"/>
<dbReference type="InParanoid" id="Q86L28"/>
<dbReference type="OMA" id="IHTMAGL"/>
<dbReference type="PRO" id="PR:Q86L28"/>
<dbReference type="Proteomes" id="UP000002195">
    <property type="component" value="Chromosome 2"/>
</dbReference>
<dbReference type="GO" id="GO:0016020">
    <property type="term" value="C:membrane"/>
    <property type="evidence" value="ECO:0007669"/>
    <property type="project" value="UniProtKB-SubCell"/>
</dbReference>
<organism>
    <name type="scientific">Dictyostelium discoideum</name>
    <name type="common">Social amoeba</name>
    <dbReference type="NCBI Taxonomy" id="44689"/>
    <lineage>
        <taxon>Eukaryota</taxon>
        <taxon>Amoebozoa</taxon>
        <taxon>Evosea</taxon>
        <taxon>Eumycetozoa</taxon>
        <taxon>Dictyostelia</taxon>
        <taxon>Dictyosteliales</taxon>
        <taxon>Dictyosteliaceae</taxon>
        <taxon>Dictyostelium</taxon>
    </lineage>
</organism>
<name>Y8993_DICDI</name>
<protein>
    <recommendedName>
        <fullName>Uncharacterized protein DDB_G0276837</fullName>
    </recommendedName>
</protein>
<proteinExistence type="predicted"/>
<accession>Q86L28</accession>
<accession>Q550K5</accession>
<evidence type="ECO:0000255" key="1"/>
<evidence type="ECO:0000305" key="2"/>
<reference key="1">
    <citation type="journal article" date="2002" name="Nature">
        <title>Sequence and analysis of chromosome 2 of Dictyostelium discoideum.</title>
        <authorList>
            <person name="Gloeckner G."/>
            <person name="Eichinger L."/>
            <person name="Szafranski K."/>
            <person name="Pachebat J.A."/>
            <person name="Bankier A.T."/>
            <person name="Dear P.H."/>
            <person name="Lehmann R."/>
            <person name="Baumgart C."/>
            <person name="Parra G."/>
            <person name="Abril J.F."/>
            <person name="Guigo R."/>
            <person name="Kumpf K."/>
            <person name="Tunggal B."/>
            <person name="Cox E.C."/>
            <person name="Quail M.A."/>
            <person name="Platzer M."/>
            <person name="Rosenthal A."/>
            <person name="Noegel A.A."/>
        </authorList>
    </citation>
    <scope>NUCLEOTIDE SEQUENCE [LARGE SCALE GENOMIC DNA]</scope>
    <source>
        <strain>AX4</strain>
    </source>
</reference>
<reference key="2">
    <citation type="journal article" date="2005" name="Nature">
        <title>The genome of the social amoeba Dictyostelium discoideum.</title>
        <authorList>
            <person name="Eichinger L."/>
            <person name="Pachebat J.A."/>
            <person name="Gloeckner G."/>
            <person name="Rajandream M.A."/>
            <person name="Sucgang R."/>
            <person name="Berriman M."/>
            <person name="Song J."/>
            <person name="Olsen R."/>
            <person name="Szafranski K."/>
            <person name="Xu Q."/>
            <person name="Tunggal B."/>
            <person name="Kummerfeld S."/>
            <person name="Madera M."/>
            <person name="Konfortov B.A."/>
            <person name="Rivero F."/>
            <person name="Bankier A.T."/>
            <person name="Lehmann R."/>
            <person name="Hamlin N."/>
            <person name="Davies R."/>
            <person name="Gaudet P."/>
            <person name="Fey P."/>
            <person name="Pilcher K."/>
            <person name="Chen G."/>
            <person name="Saunders D."/>
            <person name="Sodergren E.J."/>
            <person name="Davis P."/>
            <person name="Kerhornou A."/>
            <person name="Nie X."/>
            <person name="Hall N."/>
            <person name="Anjard C."/>
            <person name="Hemphill L."/>
            <person name="Bason N."/>
            <person name="Farbrother P."/>
            <person name="Desany B."/>
            <person name="Just E."/>
            <person name="Morio T."/>
            <person name="Rost R."/>
            <person name="Churcher C.M."/>
            <person name="Cooper J."/>
            <person name="Haydock S."/>
            <person name="van Driessche N."/>
            <person name="Cronin A."/>
            <person name="Goodhead I."/>
            <person name="Muzny D.M."/>
            <person name="Mourier T."/>
            <person name="Pain A."/>
            <person name="Lu M."/>
            <person name="Harper D."/>
            <person name="Lindsay R."/>
            <person name="Hauser H."/>
            <person name="James K.D."/>
            <person name="Quiles M."/>
            <person name="Madan Babu M."/>
            <person name="Saito T."/>
            <person name="Buchrieser C."/>
            <person name="Wardroper A."/>
            <person name="Felder M."/>
            <person name="Thangavelu M."/>
            <person name="Johnson D."/>
            <person name="Knights A."/>
            <person name="Loulseged H."/>
            <person name="Mungall K.L."/>
            <person name="Oliver K."/>
            <person name="Price C."/>
            <person name="Quail M.A."/>
            <person name="Urushihara H."/>
            <person name="Hernandez J."/>
            <person name="Rabbinowitsch E."/>
            <person name="Steffen D."/>
            <person name="Sanders M."/>
            <person name="Ma J."/>
            <person name="Kohara Y."/>
            <person name="Sharp S."/>
            <person name="Simmonds M.N."/>
            <person name="Spiegler S."/>
            <person name="Tivey A."/>
            <person name="Sugano S."/>
            <person name="White B."/>
            <person name="Walker D."/>
            <person name="Woodward J.R."/>
            <person name="Winckler T."/>
            <person name="Tanaka Y."/>
            <person name="Shaulsky G."/>
            <person name="Schleicher M."/>
            <person name="Weinstock G.M."/>
            <person name="Rosenthal A."/>
            <person name="Cox E.C."/>
            <person name="Chisholm R.L."/>
            <person name="Gibbs R.A."/>
            <person name="Loomis W.F."/>
            <person name="Platzer M."/>
            <person name="Kay R.R."/>
            <person name="Williams J.G."/>
            <person name="Dear P.H."/>
            <person name="Noegel A.A."/>
            <person name="Barrell B.G."/>
            <person name="Kuspa A."/>
        </authorList>
    </citation>
    <scope>NUCLEOTIDE SEQUENCE [LARGE SCALE GENOMIC DNA]</scope>
    <source>
        <strain>AX4</strain>
    </source>
</reference>
<sequence>MSQNNLKFTEFLSNVKSKANSKGFMKLFDMYHRQVVVKKPFSFLVHIMCGLTLTSYVIRHDKVEHHKTQPYH</sequence>
<comment type="subcellular location">
    <subcellularLocation>
        <location evidence="2">Membrane</location>
        <topology evidence="2">Single-pass membrane protein</topology>
    </subcellularLocation>
</comment>
<feature type="chain" id="PRO_0000348175" description="Uncharacterized protein DDB_G0276837">
    <location>
        <begin position="1"/>
        <end position="72"/>
    </location>
</feature>
<feature type="transmembrane region" description="Helical" evidence="1">
    <location>
        <begin position="41"/>
        <end position="58"/>
    </location>
</feature>
<keyword id="KW-0472">Membrane</keyword>
<keyword id="KW-1185">Reference proteome</keyword>
<keyword id="KW-0812">Transmembrane</keyword>
<keyword id="KW-1133">Transmembrane helix</keyword>
<gene>
    <name type="ORF">DDB_G0276837</name>
</gene>